<sequence>MEKKDIFASVSSMEEQIGHLYKQLGELKQHLAELLEENQHIKMENENLRHRFEEVQIKEKQKTQKRKEVKPKTDIGEGYDNLARLYQEGFHICNLHYGSVRKEGDCLFCLSFLNKK</sequence>
<name>YABA_BACHK</name>
<organism>
    <name type="scientific">Bacillus thuringiensis subsp. konkukian (strain 97-27)</name>
    <dbReference type="NCBI Taxonomy" id="281309"/>
    <lineage>
        <taxon>Bacteria</taxon>
        <taxon>Bacillati</taxon>
        <taxon>Bacillota</taxon>
        <taxon>Bacilli</taxon>
        <taxon>Bacillales</taxon>
        <taxon>Bacillaceae</taxon>
        <taxon>Bacillus</taxon>
        <taxon>Bacillus cereus group</taxon>
    </lineage>
</organism>
<accession>Q6HPY3</accession>
<protein>
    <recommendedName>
        <fullName evidence="1">Replication initiation control protein YabA</fullName>
    </recommendedName>
</protein>
<evidence type="ECO:0000255" key="1">
    <source>
        <dbReference type="HAMAP-Rule" id="MF_01159"/>
    </source>
</evidence>
<evidence type="ECO:0000305" key="2"/>
<proteinExistence type="inferred from homology"/>
<comment type="function">
    <text evidence="1">Involved in control of chromosome replication initiation. Inhibits the cooperative binding of DnaA to the oriC region, thus negatively regulating initiation of chromosome replication. Inhibits the ability of DnaA-ATP to form a helix on DNA; does not disassemble preformed DnaA-DNA helices. Decreases the residence time of DnaA on the chromosome at its binding sites (oriC, replication forks and promoter-binding sites). Tethers DnaA to the replication machinery via the DNA polymerase beta sliding clamp subunit (dnaN). Associates with oriC and other DnaA targets on the chromosome in a DnaA-dependent manner.</text>
</comment>
<comment type="cofactor">
    <cofactor evidence="1">
        <name>Zn(2+)</name>
        <dbReference type="ChEBI" id="CHEBI:29105"/>
    </cofactor>
    <text evidence="1">Binds 1 zinc ion per subunit.</text>
</comment>
<comment type="subunit">
    <text evidence="1">Homotetramer. Interacts with both DnaA and DnaN, acting as a bridge between these two proteins.</text>
</comment>
<comment type="subcellular location">
    <subcellularLocation>
        <location evidence="1">Cytoplasm</location>
        <location evidence="1">Nucleoid</location>
    </subcellularLocation>
    <text evidence="1">Localizes in tight foci, which correspond to the replisome at mid-cell throughout the cell cycle.</text>
</comment>
<comment type="similarity">
    <text evidence="1">Belongs to the YabA family.</text>
</comment>
<comment type="sequence caution" evidence="2">
    <conflict type="erroneous initiation">
        <sequence resource="EMBL-CDS" id="AAT61233"/>
    </conflict>
</comment>
<dbReference type="EMBL" id="AE017355">
    <property type="protein sequence ID" value="AAT61233.1"/>
    <property type="status" value="ALT_INIT"/>
    <property type="molecule type" value="Genomic_DNA"/>
</dbReference>
<dbReference type="RefSeq" id="WP_000412056.1">
    <property type="nucleotide sequence ID" value="NC_005957.1"/>
</dbReference>
<dbReference type="RefSeq" id="YP_034387.1">
    <property type="nucleotide sequence ID" value="NC_005957.1"/>
</dbReference>
<dbReference type="SMR" id="Q6HPY3"/>
<dbReference type="GeneID" id="93011037"/>
<dbReference type="KEGG" id="btk:BT9727_0029"/>
<dbReference type="PATRIC" id="fig|281309.8.peg.30"/>
<dbReference type="HOGENOM" id="CLU_157169_0_0_9"/>
<dbReference type="Proteomes" id="UP000001301">
    <property type="component" value="Chromosome"/>
</dbReference>
<dbReference type="GO" id="GO:0009295">
    <property type="term" value="C:nucleoid"/>
    <property type="evidence" value="ECO:0007669"/>
    <property type="project" value="UniProtKB-SubCell"/>
</dbReference>
<dbReference type="GO" id="GO:0006260">
    <property type="term" value="P:DNA replication"/>
    <property type="evidence" value="ECO:0007669"/>
    <property type="project" value="UniProtKB-UniRule"/>
</dbReference>
<dbReference type="Gene3D" id="1.20.5.1160">
    <property type="entry name" value="Vasodilator-stimulated phosphoprotein"/>
    <property type="match status" value="1"/>
</dbReference>
<dbReference type="HAMAP" id="MF_01159">
    <property type="entry name" value="YabA"/>
    <property type="match status" value="1"/>
</dbReference>
<dbReference type="InterPro" id="IPR010377">
    <property type="entry name" value="YabA"/>
</dbReference>
<dbReference type="NCBIfam" id="NF009644">
    <property type="entry name" value="PRK13169.1-5"/>
    <property type="match status" value="1"/>
</dbReference>
<dbReference type="Pfam" id="PF06156">
    <property type="entry name" value="YabA"/>
    <property type="match status" value="1"/>
</dbReference>
<dbReference type="PIRSF" id="PIRSF021439">
    <property type="entry name" value="DUF972"/>
    <property type="match status" value="1"/>
</dbReference>
<feature type="chain" id="PRO_0000211903" description="Replication initiation control protein YabA">
    <location>
        <begin position="1"/>
        <end position="116"/>
    </location>
</feature>
<feature type="binding site" evidence="1">
    <location>
        <position position="91"/>
    </location>
    <ligand>
        <name>Zn(2+)</name>
        <dbReference type="ChEBI" id="CHEBI:29105"/>
    </ligand>
</feature>
<feature type="binding site" evidence="1">
    <location>
        <position position="93"/>
    </location>
    <ligand>
        <name>Zn(2+)</name>
        <dbReference type="ChEBI" id="CHEBI:29105"/>
    </ligand>
</feature>
<feature type="binding site" evidence="1">
    <location>
        <position position="106"/>
    </location>
    <ligand>
        <name>Zn(2+)</name>
        <dbReference type="ChEBI" id="CHEBI:29105"/>
    </ligand>
</feature>
<feature type="binding site" evidence="1">
    <location>
        <position position="109"/>
    </location>
    <ligand>
        <name>Zn(2+)</name>
        <dbReference type="ChEBI" id="CHEBI:29105"/>
    </ligand>
</feature>
<keyword id="KW-0963">Cytoplasm</keyword>
<keyword id="KW-0235">DNA replication</keyword>
<keyword id="KW-0236">DNA replication inhibitor</keyword>
<keyword id="KW-0479">Metal-binding</keyword>
<keyword id="KW-0862">Zinc</keyword>
<gene>
    <name evidence="1" type="primary">yabA</name>
    <name type="ordered locus">BT9727_0029</name>
</gene>
<reference key="1">
    <citation type="journal article" date="2006" name="J. Bacteriol.">
        <title>Pathogenomic sequence analysis of Bacillus cereus and Bacillus thuringiensis isolates closely related to Bacillus anthracis.</title>
        <authorList>
            <person name="Han C.S."/>
            <person name="Xie G."/>
            <person name="Challacombe J.F."/>
            <person name="Altherr M.R."/>
            <person name="Bhotika S.S."/>
            <person name="Bruce D."/>
            <person name="Campbell C.S."/>
            <person name="Campbell M.L."/>
            <person name="Chen J."/>
            <person name="Chertkov O."/>
            <person name="Cleland C."/>
            <person name="Dimitrijevic M."/>
            <person name="Doggett N.A."/>
            <person name="Fawcett J.J."/>
            <person name="Glavina T."/>
            <person name="Goodwin L.A."/>
            <person name="Hill K.K."/>
            <person name="Hitchcock P."/>
            <person name="Jackson P.J."/>
            <person name="Keim P."/>
            <person name="Kewalramani A.R."/>
            <person name="Longmire J."/>
            <person name="Lucas S."/>
            <person name="Malfatti S."/>
            <person name="McMurry K."/>
            <person name="Meincke L.J."/>
            <person name="Misra M."/>
            <person name="Moseman B.L."/>
            <person name="Mundt M."/>
            <person name="Munk A.C."/>
            <person name="Okinaka R.T."/>
            <person name="Parson-Quintana B."/>
            <person name="Reilly L.P."/>
            <person name="Richardson P."/>
            <person name="Robinson D.L."/>
            <person name="Rubin E."/>
            <person name="Saunders E."/>
            <person name="Tapia R."/>
            <person name="Tesmer J.G."/>
            <person name="Thayer N."/>
            <person name="Thompson L.S."/>
            <person name="Tice H."/>
            <person name="Ticknor L.O."/>
            <person name="Wills P.L."/>
            <person name="Brettin T.S."/>
            <person name="Gilna P."/>
        </authorList>
    </citation>
    <scope>NUCLEOTIDE SEQUENCE [LARGE SCALE GENOMIC DNA]</scope>
    <source>
        <strain>97-27</strain>
    </source>
</reference>